<dbReference type="EMBL" id="CP000686">
    <property type="protein sequence ID" value="ABQ89376.1"/>
    <property type="molecule type" value="Genomic_DNA"/>
</dbReference>
<dbReference type="RefSeq" id="WP_011955729.1">
    <property type="nucleotide sequence ID" value="NC_009523.1"/>
</dbReference>
<dbReference type="SMR" id="A5URX3"/>
<dbReference type="STRING" id="357808.RoseRS_0967"/>
<dbReference type="KEGG" id="rrs:RoseRS_0967"/>
<dbReference type="eggNOG" id="COG0375">
    <property type="taxonomic scope" value="Bacteria"/>
</dbReference>
<dbReference type="HOGENOM" id="CLU_126929_4_1_0"/>
<dbReference type="OrthoDB" id="9800361at2"/>
<dbReference type="Proteomes" id="UP000006554">
    <property type="component" value="Chromosome"/>
</dbReference>
<dbReference type="GO" id="GO:0016151">
    <property type="term" value="F:nickel cation binding"/>
    <property type="evidence" value="ECO:0007669"/>
    <property type="project" value="UniProtKB-UniRule"/>
</dbReference>
<dbReference type="GO" id="GO:0008270">
    <property type="term" value="F:zinc ion binding"/>
    <property type="evidence" value="ECO:0007669"/>
    <property type="project" value="UniProtKB-UniRule"/>
</dbReference>
<dbReference type="GO" id="GO:0051604">
    <property type="term" value="P:protein maturation"/>
    <property type="evidence" value="ECO:0007669"/>
    <property type="project" value="InterPro"/>
</dbReference>
<dbReference type="GO" id="GO:0036211">
    <property type="term" value="P:protein modification process"/>
    <property type="evidence" value="ECO:0007669"/>
    <property type="project" value="UniProtKB-UniRule"/>
</dbReference>
<dbReference type="Gene3D" id="3.30.2320.80">
    <property type="match status" value="1"/>
</dbReference>
<dbReference type="HAMAP" id="MF_00213">
    <property type="entry name" value="HypA_HybF"/>
    <property type="match status" value="1"/>
</dbReference>
<dbReference type="InterPro" id="IPR000688">
    <property type="entry name" value="HypA/HybF"/>
</dbReference>
<dbReference type="NCBIfam" id="TIGR00100">
    <property type="entry name" value="hypA"/>
    <property type="match status" value="1"/>
</dbReference>
<dbReference type="PANTHER" id="PTHR34535">
    <property type="entry name" value="HYDROGENASE MATURATION FACTOR HYPA"/>
    <property type="match status" value="1"/>
</dbReference>
<dbReference type="PANTHER" id="PTHR34535:SF3">
    <property type="entry name" value="HYDROGENASE MATURATION FACTOR HYPA"/>
    <property type="match status" value="1"/>
</dbReference>
<dbReference type="Pfam" id="PF01155">
    <property type="entry name" value="HypA"/>
    <property type="match status" value="1"/>
</dbReference>
<dbReference type="PIRSF" id="PIRSF004761">
    <property type="entry name" value="Hydrgn_mat_HypA"/>
    <property type="match status" value="1"/>
</dbReference>
<name>HYPA_ROSS1</name>
<reference key="1">
    <citation type="submission" date="2007-04" db="EMBL/GenBank/DDBJ databases">
        <title>Complete sequence of Roseiflexus sp. RS-1.</title>
        <authorList>
            <consortium name="US DOE Joint Genome Institute"/>
            <person name="Copeland A."/>
            <person name="Lucas S."/>
            <person name="Lapidus A."/>
            <person name="Barry K."/>
            <person name="Detter J.C."/>
            <person name="Glavina del Rio T."/>
            <person name="Hammon N."/>
            <person name="Israni S."/>
            <person name="Dalin E."/>
            <person name="Tice H."/>
            <person name="Pitluck S."/>
            <person name="Chertkov O."/>
            <person name="Brettin T."/>
            <person name="Bruce D."/>
            <person name="Han C."/>
            <person name="Schmutz J."/>
            <person name="Larimer F."/>
            <person name="Land M."/>
            <person name="Hauser L."/>
            <person name="Kyrpides N."/>
            <person name="Mikhailova N."/>
            <person name="Bryant D.A."/>
            <person name="Richardson P."/>
        </authorList>
    </citation>
    <scope>NUCLEOTIDE SEQUENCE [LARGE SCALE GENOMIC DNA]</scope>
    <source>
        <strain>RS-1</strain>
    </source>
</reference>
<protein>
    <recommendedName>
        <fullName evidence="1">Hydrogenase maturation factor HypA</fullName>
    </recommendedName>
</protein>
<evidence type="ECO:0000255" key="1">
    <source>
        <dbReference type="HAMAP-Rule" id="MF_00213"/>
    </source>
</evidence>
<keyword id="KW-0479">Metal-binding</keyword>
<keyword id="KW-0533">Nickel</keyword>
<keyword id="KW-0862">Zinc</keyword>
<gene>
    <name evidence="1" type="primary">hypA</name>
    <name type="ordered locus">RoseRS_0967</name>
</gene>
<sequence>MHELSIAHSLVEIAEEAAAKAGVARVTVVHLRLGTLSGVVRDALLFGFDVASAGTRLEGARLEIEEVPLQVYCETCDTVVALPDVRYFRCPQCGAACRRIVTGQEIELAALEYEDDTPEATAS</sequence>
<organism>
    <name type="scientific">Roseiflexus sp. (strain RS-1)</name>
    <dbReference type="NCBI Taxonomy" id="357808"/>
    <lineage>
        <taxon>Bacteria</taxon>
        <taxon>Bacillati</taxon>
        <taxon>Chloroflexota</taxon>
        <taxon>Chloroflexia</taxon>
        <taxon>Chloroflexales</taxon>
        <taxon>Roseiflexineae</taxon>
        <taxon>Roseiflexaceae</taxon>
        <taxon>Roseiflexus</taxon>
    </lineage>
</organism>
<feature type="chain" id="PRO_1000023856" description="Hydrogenase maturation factor HypA">
    <location>
        <begin position="1"/>
        <end position="123"/>
    </location>
</feature>
<feature type="binding site" evidence="1">
    <location>
        <position position="2"/>
    </location>
    <ligand>
        <name>Ni(2+)</name>
        <dbReference type="ChEBI" id="CHEBI:49786"/>
    </ligand>
</feature>
<feature type="binding site" evidence="1">
    <location>
        <position position="73"/>
    </location>
    <ligand>
        <name>Zn(2+)</name>
        <dbReference type="ChEBI" id="CHEBI:29105"/>
    </ligand>
</feature>
<feature type="binding site" evidence="1">
    <location>
        <position position="76"/>
    </location>
    <ligand>
        <name>Zn(2+)</name>
        <dbReference type="ChEBI" id="CHEBI:29105"/>
    </ligand>
</feature>
<feature type="binding site" evidence="1">
    <location>
        <position position="90"/>
    </location>
    <ligand>
        <name>Zn(2+)</name>
        <dbReference type="ChEBI" id="CHEBI:29105"/>
    </ligand>
</feature>
<feature type="binding site" evidence="1">
    <location>
        <position position="93"/>
    </location>
    <ligand>
        <name>Zn(2+)</name>
        <dbReference type="ChEBI" id="CHEBI:29105"/>
    </ligand>
</feature>
<comment type="function">
    <text evidence="1">Involved in the maturation of [NiFe] hydrogenases. Required for nickel insertion into the metal center of the hydrogenase.</text>
</comment>
<comment type="similarity">
    <text evidence="1">Belongs to the HypA/HybF family.</text>
</comment>
<proteinExistence type="inferred from homology"/>
<accession>A5URX3</accession>